<organism>
    <name type="scientific">Shigella dysenteriae serotype 1 (strain Sd197)</name>
    <dbReference type="NCBI Taxonomy" id="300267"/>
    <lineage>
        <taxon>Bacteria</taxon>
        <taxon>Pseudomonadati</taxon>
        <taxon>Pseudomonadota</taxon>
        <taxon>Gammaproteobacteria</taxon>
        <taxon>Enterobacterales</taxon>
        <taxon>Enterobacteriaceae</taxon>
        <taxon>Shigella</taxon>
    </lineage>
</organism>
<dbReference type="EC" id="2.8.1.6" evidence="1"/>
<dbReference type="EMBL" id="CP000034">
    <property type="protein sequence ID" value="ABB61013.1"/>
    <property type="molecule type" value="Genomic_DNA"/>
</dbReference>
<dbReference type="RefSeq" id="WP_000951215.1">
    <property type="nucleotide sequence ID" value="NC_007606.1"/>
</dbReference>
<dbReference type="RefSeq" id="YP_402502.1">
    <property type="nucleotide sequence ID" value="NC_007606.1"/>
</dbReference>
<dbReference type="SMR" id="Q32I44"/>
<dbReference type="STRING" id="300267.SDY_0831"/>
<dbReference type="EnsemblBacteria" id="ABB61013">
    <property type="protein sequence ID" value="ABB61013"/>
    <property type="gene ID" value="SDY_0831"/>
</dbReference>
<dbReference type="KEGG" id="sdy:SDY_0831"/>
<dbReference type="PATRIC" id="fig|300267.13.peg.957"/>
<dbReference type="HOGENOM" id="CLU_033172_1_2_6"/>
<dbReference type="UniPathway" id="UPA00078">
    <property type="reaction ID" value="UER00162"/>
</dbReference>
<dbReference type="Proteomes" id="UP000002716">
    <property type="component" value="Chromosome"/>
</dbReference>
<dbReference type="GO" id="GO:0051537">
    <property type="term" value="F:2 iron, 2 sulfur cluster binding"/>
    <property type="evidence" value="ECO:0007669"/>
    <property type="project" value="UniProtKB-KW"/>
</dbReference>
<dbReference type="GO" id="GO:0051539">
    <property type="term" value="F:4 iron, 4 sulfur cluster binding"/>
    <property type="evidence" value="ECO:0007669"/>
    <property type="project" value="UniProtKB-KW"/>
</dbReference>
<dbReference type="GO" id="GO:0004076">
    <property type="term" value="F:biotin synthase activity"/>
    <property type="evidence" value="ECO:0007669"/>
    <property type="project" value="UniProtKB-UniRule"/>
</dbReference>
<dbReference type="GO" id="GO:0005506">
    <property type="term" value="F:iron ion binding"/>
    <property type="evidence" value="ECO:0007669"/>
    <property type="project" value="UniProtKB-UniRule"/>
</dbReference>
<dbReference type="GO" id="GO:0009102">
    <property type="term" value="P:biotin biosynthetic process"/>
    <property type="evidence" value="ECO:0007669"/>
    <property type="project" value="UniProtKB-UniRule"/>
</dbReference>
<dbReference type="CDD" id="cd01335">
    <property type="entry name" value="Radical_SAM"/>
    <property type="match status" value="1"/>
</dbReference>
<dbReference type="FunFam" id="3.20.20.70:FF:000011">
    <property type="entry name" value="Biotin synthase"/>
    <property type="match status" value="1"/>
</dbReference>
<dbReference type="Gene3D" id="3.20.20.70">
    <property type="entry name" value="Aldolase class I"/>
    <property type="match status" value="1"/>
</dbReference>
<dbReference type="HAMAP" id="MF_01694">
    <property type="entry name" value="BioB"/>
    <property type="match status" value="1"/>
</dbReference>
<dbReference type="InterPro" id="IPR013785">
    <property type="entry name" value="Aldolase_TIM"/>
</dbReference>
<dbReference type="InterPro" id="IPR010722">
    <property type="entry name" value="BATS_dom"/>
</dbReference>
<dbReference type="InterPro" id="IPR002684">
    <property type="entry name" value="Biotin_synth/BioAB"/>
</dbReference>
<dbReference type="InterPro" id="IPR024177">
    <property type="entry name" value="Biotin_synthase"/>
</dbReference>
<dbReference type="InterPro" id="IPR006638">
    <property type="entry name" value="Elp3/MiaA/NifB-like_rSAM"/>
</dbReference>
<dbReference type="InterPro" id="IPR007197">
    <property type="entry name" value="rSAM"/>
</dbReference>
<dbReference type="NCBIfam" id="TIGR00433">
    <property type="entry name" value="bioB"/>
    <property type="match status" value="1"/>
</dbReference>
<dbReference type="PANTHER" id="PTHR22976">
    <property type="entry name" value="BIOTIN SYNTHASE"/>
    <property type="match status" value="1"/>
</dbReference>
<dbReference type="PANTHER" id="PTHR22976:SF2">
    <property type="entry name" value="BIOTIN SYNTHASE, MITOCHONDRIAL"/>
    <property type="match status" value="1"/>
</dbReference>
<dbReference type="Pfam" id="PF06968">
    <property type="entry name" value="BATS"/>
    <property type="match status" value="1"/>
</dbReference>
<dbReference type="Pfam" id="PF04055">
    <property type="entry name" value="Radical_SAM"/>
    <property type="match status" value="1"/>
</dbReference>
<dbReference type="PIRSF" id="PIRSF001619">
    <property type="entry name" value="Biotin_synth"/>
    <property type="match status" value="1"/>
</dbReference>
<dbReference type="SFLD" id="SFLDG01060">
    <property type="entry name" value="BATS_domain_containing"/>
    <property type="match status" value="1"/>
</dbReference>
<dbReference type="SFLD" id="SFLDF00272">
    <property type="entry name" value="biotin_synthase"/>
    <property type="match status" value="1"/>
</dbReference>
<dbReference type="SMART" id="SM00876">
    <property type="entry name" value="BATS"/>
    <property type="match status" value="1"/>
</dbReference>
<dbReference type="SMART" id="SM00729">
    <property type="entry name" value="Elp3"/>
    <property type="match status" value="1"/>
</dbReference>
<dbReference type="SUPFAM" id="SSF102114">
    <property type="entry name" value="Radical SAM enzymes"/>
    <property type="match status" value="1"/>
</dbReference>
<dbReference type="PROSITE" id="PS51918">
    <property type="entry name" value="RADICAL_SAM"/>
    <property type="match status" value="1"/>
</dbReference>
<accession>Q32I44</accession>
<proteinExistence type="inferred from homology"/>
<gene>
    <name evidence="1" type="primary">bioB</name>
    <name type="ordered locus">SDY_0831</name>
</gene>
<feature type="chain" id="PRO_0000381633" description="Biotin synthase">
    <location>
        <begin position="1"/>
        <end position="346"/>
    </location>
</feature>
<feature type="domain" description="Radical SAM core" evidence="2">
    <location>
        <begin position="38"/>
        <end position="256"/>
    </location>
</feature>
<feature type="binding site" evidence="1">
    <location>
        <position position="53"/>
    </location>
    <ligand>
        <name>[4Fe-4S] cluster</name>
        <dbReference type="ChEBI" id="CHEBI:49883"/>
        <note>4Fe-4S-S-AdoMet</note>
    </ligand>
</feature>
<feature type="binding site" evidence="1">
    <location>
        <position position="57"/>
    </location>
    <ligand>
        <name>[4Fe-4S] cluster</name>
        <dbReference type="ChEBI" id="CHEBI:49883"/>
        <note>4Fe-4S-S-AdoMet</note>
    </ligand>
</feature>
<feature type="binding site" evidence="1">
    <location>
        <position position="60"/>
    </location>
    <ligand>
        <name>[4Fe-4S] cluster</name>
        <dbReference type="ChEBI" id="CHEBI:49883"/>
        <note>4Fe-4S-S-AdoMet</note>
    </ligand>
</feature>
<feature type="binding site" evidence="1">
    <location>
        <position position="97"/>
    </location>
    <ligand>
        <name>[2Fe-2S] cluster</name>
        <dbReference type="ChEBI" id="CHEBI:190135"/>
    </ligand>
</feature>
<feature type="binding site" evidence="1">
    <location>
        <position position="128"/>
    </location>
    <ligand>
        <name>[2Fe-2S] cluster</name>
        <dbReference type="ChEBI" id="CHEBI:190135"/>
    </ligand>
</feature>
<feature type="binding site" evidence="1">
    <location>
        <position position="188"/>
    </location>
    <ligand>
        <name>[2Fe-2S] cluster</name>
        <dbReference type="ChEBI" id="CHEBI:190135"/>
    </ligand>
</feature>
<feature type="binding site" evidence="1">
    <location>
        <position position="260"/>
    </location>
    <ligand>
        <name>[2Fe-2S] cluster</name>
        <dbReference type="ChEBI" id="CHEBI:190135"/>
    </ligand>
</feature>
<evidence type="ECO:0000255" key="1">
    <source>
        <dbReference type="HAMAP-Rule" id="MF_01694"/>
    </source>
</evidence>
<evidence type="ECO:0000255" key="2">
    <source>
        <dbReference type="PROSITE-ProRule" id="PRU01266"/>
    </source>
</evidence>
<reference key="1">
    <citation type="journal article" date="2005" name="Nucleic Acids Res.">
        <title>Genome dynamics and diversity of Shigella species, the etiologic agents of bacillary dysentery.</title>
        <authorList>
            <person name="Yang F."/>
            <person name="Yang J."/>
            <person name="Zhang X."/>
            <person name="Chen L."/>
            <person name="Jiang Y."/>
            <person name="Yan Y."/>
            <person name="Tang X."/>
            <person name="Wang J."/>
            <person name="Xiong Z."/>
            <person name="Dong J."/>
            <person name="Xue Y."/>
            <person name="Zhu Y."/>
            <person name="Xu X."/>
            <person name="Sun L."/>
            <person name="Chen S."/>
            <person name="Nie H."/>
            <person name="Peng J."/>
            <person name="Xu J."/>
            <person name="Wang Y."/>
            <person name="Yuan Z."/>
            <person name="Wen Y."/>
            <person name="Yao Z."/>
            <person name="Shen Y."/>
            <person name="Qiang B."/>
            <person name="Hou Y."/>
            <person name="Yu J."/>
            <person name="Jin Q."/>
        </authorList>
    </citation>
    <scope>NUCLEOTIDE SEQUENCE [LARGE SCALE GENOMIC DNA]</scope>
    <source>
        <strain>Sd197</strain>
    </source>
</reference>
<sequence length="346" mass="38616">MAHRPRWTLSQVTELFEKPLLDLLFEAQQVHRQHFDPRQVQVSTLLSIKTGACPEDCKYCPQSSRYKTGLEAERLMEVEQVLESARKAKAAGSTRFCMGAAWKNPHERDMPYLEQMVQGVKAMGLEACMTLGTLSESQAQRLANAGLDYYNHNLDTSPEFYGNIITTRTYQERLDTLEKVRDAGIKVCSGGIVGLGETVKDRAGLLLQLANLPTPPESVPINMLVKVKGTPLADNDDVDAFDFIRTIAVARIMMPTSYVRLSAGREQMNEQTQAMCFVAGANSIFYGCKLLTTPNPEEDKDLQLFRKLGLNPQQTAVLAGDNEQQQRLEQALMTPDTDEYYNAAAL</sequence>
<comment type="function">
    <text evidence="1">Catalyzes the conversion of dethiobiotin (DTB) to biotin by the insertion of a sulfur atom into dethiobiotin via a radical-based mechanism.</text>
</comment>
<comment type="catalytic activity">
    <reaction evidence="1">
        <text>(4R,5S)-dethiobiotin + (sulfur carrier)-SH + 2 reduced [2Fe-2S]-[ferredoxin] + 2 S-adenosyl-L-methionine = (sulfur carrier)-H + biotin + 2 5'-deoxyadenosine + 2 L-methionine + 2 oxidized [2Fe-2S]-[ferredoxin]</text>
        <dbReference type="Rhea" id="RHEA:22060"/>
        <dbReference type="Rhea" id="RHEA-COMP:10000"/>
        <dbReference type="Rhea" id="RHEA-COMP:10001"/>
        <dbReference type="Rhea" id="RHEA-COMP:14737"/>
        <dbReference type="Rhea" id="RHEA-COMP:14739"/>
        <dbReference type="ChEBI" id="CHEBI:17319"/>
        <dbReference type="ChEBI" id="CHEBI:29917"/>
        <dbReference type="ChEBI" id="CHEBI:33737"/>
        <dbReference type="ChEBI" id="CHEBI:33738"/>
        <dbReference type="ChEBI" id="CHEBI:57586"/>
        <dbReference type="ChEBI" id="CHEBI:57844"/>
        <dbReference type="ChEBI" id="CHEBI:59789"/>
        <dbReference type="ChEBI" id="CHEBI:64428"/>
        <dbReference type="ChEBI" id="CHEBI:149473"/>
        <dbReference type="EC" id="2.8.1.6"/>
    </reaction>
</comment>
<comment type="cofactor">
    <cofactor evidence="1">
        <name>[4Fe-4S] cluster</name>
        <dbReference type="ChEBI" id="CHEBI:49883"/>
    </cofactor>
    <text evidence="1">Binds 1 [4Fe-4S] cluster. The cluster is coordinated with 3 cysteines and an exchangeable S-adenosyl-L-methionine.</text>
</comment>
<comment type="cofactor">
    <cofactor evidence="1">
        <name>[2Fe-2S] cluster</name>
        <dbReference type="ChEBI" id="CHEBI:190135"/>
    </cofactor>
    <text evidence="1">Binds 1 [2Fe-2S] cluster. The cluster is coordinated with 3 cysteines and 1 arginine.</text>
</comment>
<comment type="pathway">
    <text evidence="1">Cofactor biosynthesis; biotin biosynthesis; biotin from 7,8-diaminononanoate: step 2/2.</text>
</comment>
<comment type="subunit">
    <text evidence="1">Homodimer.</text>
</comment>
<comment type="similarity">
    <text evidence="1">Belongs to the radical SAM superfamily. Biotin synthase family.</text>
</comment>
<keyword id="KW-0001">2Fe-2S</keyword>
<keyword id="KW-0004">4Fe-4S</keyword>
<keyword id="KW-0093">Biotin biosynthesis</keyword>
<keyword id="KW-0408">Iron</keyword>
<keyword id="KW-0411">Iron-sulfur</keyword>
<keyword id="KW-0479">Metal-binding</keyword>
<keyword id="KW-1185">Reference proteome</keyword>
<keyword id="KW-0949">S-adenosyl-L-methionine</keyword>
<keyword id="KW-0808">Transferase</keyword>
<name>BIOB_SHIDS</name>
<protein>
    <recommendedName>
        <fullName evidence="1">Biotin synthase</fullName>
        <ecNumber evidence="1">2.8.1.6</ecNumber>
    </recommendedName>
</protein>